<proteinExistence type="inferred from homology"/>
<name>PG085_VAR67</name>
<dbReference type="EC" id="3.4.24.-" evidence="1"/>
<dbReference type="EMBL" id="X67119">
    <property type="protein sequence ID" value="CAA47563.1"/>
    <property type="molecule type" value="Genomic_DNA"/>
</dbReference>
<dbReference type="EMBL" id="X69198">
    <property type="protein sequence ID" value="CAA49004.1"/>
    <property type="molecule type" value="Genomic_DNA"/>
</dbReference>
<dbReference type="PIR" id="S33078">
    <property type="entry name" value="S33078"/>
</dbReference>
<dbReference type="SMR" id="P0DOS9"/>
<dbReference type="KEGG" id="vg:1486429"/>
<dbReference type="Proteomes" id="UP000002060">
    <property type="component" value="Segment"/>
</dbReference>
<dbReference type="GO" id="GO:0044423">
    <property type="term" value="C:virion component"/>
    <property type="evidence" value="ECO:0007669"/>
    <property type="project" value="UniProtKB-KW"/>
</dbReference>
<dbReference type="GO" id="GO:0004222">
    <property type="term" value="F:metalloendopeptidase activity"/>
    <property type="evidence" value="ECO:0007669"/>
    <property type="project" value="InterPro"/>
</dbReference>
<dbReference type="GO" id="GO:0008270">
    <property type="term" value="F:zinc ion binding"/>
    <property type="evidence" value="ECO:0007669"/>
    <property type="project" value="InterPro"/>
</dbReference>
<dbReference type="GO" id="GO:0006508">
    <property type="term" value="P:proteolysis"/>
    <property type="evidence" value="ECO:0007669"/>
    <property type="project" value="UniProtKB-KW"/>
</dbReference>
<dbReference type="GO" id="GO:0019058">
    <property type="term" value="P:viral life cycle"/>
    <property type="evidence" value="ECO:0007669"/>
    <property type="project" value="InterPro"/>
</dbReference>
<dbReference type="InterPro" id="IPR011249">
    <property type="entry name" value="Metalloenz_LuxS/M16"/>
</dbReference>
<dbReference type="InterPro" id="IPR005072">
    <property type="entry name" value="Peptidase_M44"/>
</dbReference>
<dbReference type="Pfam" id="PF03410">
    <property type="entry name" value="Peptidase_M44"/>
    <property type="match status" value="1"/>
</dbReference>
<dbReference type="PIRSF" id="PIRSF015679">
    <property type="entry name" value="Peptidase_M44"/>
    <property type="match status" value="1"/>
</dbReference>
<dbReference type="SUPFAM" id="SSF63411">
    <property type="entry name" value="LuxS/MPP-like metallohydrolase"/>
    <property type="match status" value="1"/>
</dbReference>
<keyword id="KW-0378">Hydrolase</keyword>
<keyword id="KW-0426">Late protein</keyword>
<keyword id="KW-0479">Metal-binding</keyword>
<keyword id="KW-0482">Metalloprotease</keyword>
<keyword id="KW-0645">Protease</keyword>
<keyword id="KW-1185">Reference proteome</keyword>
<keyword id="KW-0946">Virion</keyword>
<keyword id="KW-0862">Zinc</keyword>
<comment type="function">
    <text evidence="1">Probably involved in maturation of some viral proteins by processing them preferentially at Ala-Gly-|-Ser/Thr/Lys motifs. Does not seem to be responsible for the cleavage of major core proteins.</text>
</comment>
<comment type="cofactor">
    <cofactor evidence="1">
        <name>Zn(2+)</name>
        <dbReference type="ChEBI" id="CHEBI:29105"/>
    </cofactor>
    <text evidence="1">Binds 1 zinc ion.</text>
</comment>
<comment type="subcellular location">
    <subcellularLocation>
        <location evidence="1">Virion</location>
    </subcellularLocation>
    <text evidence="1">Localizes to the virion core.</text>
</comment>
<comment type="PTM">
    <text evidence="1">Undergoes proteolytic processing during the course of infection. May be cleaved into 46 kDa and 22 kDa products (Potential).</text>
</comment>
<comment type="similarity">
    <text evidence="3">Belongs to the peptidase M44 family.</text>
</comment>
<gene>
    <name type="primary">OPG085</name>
    <name type="ORF">G1L</name>
</gene>
<feature type="chain" id="PRO_0000218447" description="Metalloendopeptidase OPG085">
    <location>
        <begin position="1"/>
        <end position="591"/>
    </location>
</feature>
<feature type="active site" evidence="2">
    <location>
        <position position="44"/>
    </location>
</feature>
<feature type="binding site" evidence="2">
    <location>
        <position position="41"/>
    </location>
    <ligand>
        <name>Zn(2+)</name>
        <dbReference type="ChEBI" id="CHEBI:29105"/>
        <note>catalytic</note>
    </ligand>
</feature>
<feature type="binding site" evidence="2">
    <location>
        <position position="45"/>
    </location>
    <ligand>
        <name>Zn(2+)</name>
        <dbReference type="ChEBI" id="CHEBI:29105"/>
        <note>catalytic</note>
    </ligand>
</feature>
<feature type="binding site" evidence="2">
    <location>
        <position position="112"/>
    </location>
    <ligand>
        <name>Zn(2+)</name>
        <dbReference type="ChEBI" id="CHEBI:29105"/>
        <note>catalytic</note>
    </ligand>
</feature>
<reference key="1">
    <citation type="journal article" date="1993" name="Virus Res.">
        <title>Analysis of the nucleotide sequence of a 43 kbp segment of the genome of variola virus India-1967 strain.</title>
        <authorList>
            <person name="Shchelkunov S.N."/>
            <person name="Blinov V.M."/>
            <person name="Resenchuk S.M."/>
            <person name="Totmenin A.V."/>
            <person name="Sandakhchiev L.S."/>
        </authorList>
    </citation>
    <scope>NUCLEOTIDE SEQUENCE [GENOMIC DNA]</scope>
</reference>
<reference key="2">
    <citation type="journal article" date="1993" name="Virus Res.">
        <title>Nucleotide sequence analysis of variola virus HindIII M, L, I genome fragments.</title>
        <authorList>
            <person name="Shchelkunov S.N."/>
            <person name="Blinov V.M."/>
            <person name="Totmenin A.V."/>
            <person name="Marennikova S.S."/>
            <person name="Kolykhalov A.A."/>
            <person name="Frolov I.V."/>
            <person name="Chizhikov V.E."/>
            <person name="Gytorov V.V."/>
            <person name="Gashikov P.V."/>
            <person name="Belanov E.F."/>
            <person name="Belavin P.A."/>
            <person name="Resenchuk S.M."/>
            <person name="Andzhaparidze O.G."/>
            <person name="Sandakhchiev L.S."/>
        </authorList>
    </citation>
    <scope>NUCLEOTIDE SEQUENCE [GENOMIC DNA]</scope>
</reference>
<reference key="3">
    <citation type="journal article" date="1993" name="FEBS Lett.">
        <title>Genes of variola and vaccinia viruses necessary to overcome the host protective mechanisms.</title>
        <authorList>
            <person name="Shchelkunov S.N."/>
            <person name="Blinov V.M."/>
            <person name="Sandakhchiev L.S."/>
        </authorList>
    </citation>
    <scope>NUCLEOTIDE SEQUENCE [LARGE SCALE GENOMIC DNA]</scope>
</reference>
<organism>
    <name type="scientific">Variola virus (isolate Human/India/Ind3/1967)</name>
    <name type="common">VARV</name>
    <name type="synonym">Smallpox virus</name>
    <dbReference type="NCBI Taxonomy" id="587200"/>
    <lineage>
        <taxon>Viruses</taxon>
        <taxon>Varidnaviria</taxon>
        <taxon>Bamfordvirae</taxon>
        <taxon>Nucleocytoviricota</taxon>
        <taxon>Pokkesviricetes</taxon>
        <taxon>Chitovirales</taxon>
        <taxon>Poxviridae</taxon>
        <taxon>Chordopoxvirinae</taxon>
        <taxon>Orthopoxvirus</taxon>
        <taxon>Variola virus</taxon>
    </lineage>
</organism>
<evidence type="ECO:0000250" key="1">
    <source>
        <dbReference type="UniProtKB" id="P16713"/>
    </source>
</evidence>
<evidence type="ECO:0000255" key="2"/>
<evidence type="ECO:0000305" key="3"/>
<protein>
    <recommendedName>
        <fullName>Metalloendopeptidase OPG085</fullName>
        <ecNumber evidence="1">3.4.24.-</ecNumber>
    </recommendedName>
    <alternativeName>
        <fullName>Metalloendopeptidase G1</fullName>
    </alternativeName>
</protein>
<accession>P0DOS9</accession>
<accession>P32991</accession>
<accession>Q85379</accession>
<accession>Q89209</accession>
<organismHost>
    <name type="scientific">Homo sapiens</name>
    <name type="common">Human</name>
    <dbReference type="NCBI Taxonomy" id="9606"/>
</organismHost>
<sequence length="591" mass="68037">MIVLPNKVRIFINDRMKKDIYLGISNFGFENDIDEILGIAHLLEHLLISFDSTIFLANASTSRSYMSFWCKSINSATESDAIRTLVSWFFSNGKLKDNFSLSSIRFHIKELENEYYFRNEVFHCMDILTFLSGGDLYNGGRIDMIDNLNIVRDMLVNRMQRISGSNIVIFVKRLGPGTLDFFNQTFGSLPACPEIIPSSIPVSTNGKIVMTPSPFYTVMVKINPTLDNILGILYLYETYHLIDYETIGNQLYLTVSFIDETEYESFLRGEAILQISQCQRINMNYSDDYMMNIYLNFPWLSHDLYDYITRINDDSKSILISLTNEIYTSIINRDIIVIYPNFSKAMCNTRDTQQHPIVVLDATNDGLIKKPYRSIPLMKRLTSNEIFIRYGDASLMDMITLSLSKQDISLKRNAEGIRVKHSFSADDIQAIMESDSFLKYSRSKPAAMYQYIFLSFFASGNSIDDILTNRDSTLEFSKKTKSKILFGRNARYDVTTKSSFVCGIVRGKLLDKTSLVEMMWDLKKKGLIYSMEFTNLLSKNTFYLFTFTIYTDEVYDYLNTNKLFSAKCLVISTKGDVENFSSLKKDVVIRV</sequence>